<keyword id="KW-0167">Capsid protein</keyword>
<keyword id="KW-1048">Host nucleus</keyword>
<keyword id="KW-0945">Host-virus interaction</keyword>
<keyword id="KW-0426">Late protein</keyword>
<keyword id="KW-1233">Viral attachment to host adhesion receptor</keyword>
<keyword id="KW-1161">Viral attachment to host cell</keyword>
<keyword id="KW-0946">Virion</keyword>
<keyword id="KW-1160">Virus entry into host cell</keyword>
<proteinExistence type="evidence at transcript level"/>
<name>SPIKE_ADE31</name>
<sequence>MKRSRTQYAEEPEENDDFNPVYPFDPYDTAHVPFVTPPFTSSNAFQEKPPGVLSLNYKDPIVTENGSLTLKLGNGIKLNSQGQLTTTNTKVLEPLPHTSQGLTLSWSAPLSVKASALTLNTMAPFTTTNESLSLVTAPPITVEASQLGLASCSTSKLRGGGNLGFHLPAPFVVPSSNALTLSASDPLTVNSNSLGLNITSPITLINGSLALATSPPLDTTGSTLNLSVAAPLSVSQNALTVSTGNGLQVSGSQLVTRIGDGLRFDNGVIKAHVAGGNETLRGKIILDVNYPFDATTNLSLRRGSGLIYNESTNWNLTTDISTEKGLTFSGNQIAINAGPCGLTFNNRKLQVKLGAGHTFSSNDNIALNSIATPYDPLTLWTTPDPPPNCTLRQELDAKLTLCLTKNESIVNGIVSLIGVKGDLLHIQPTTTTVGLHLVFDRQGRLVTTTPTALVPQASWGYKQGQSVSSSAVANALGFMPNVSAYPRPNAGEAKSQMLSQTYLQGDTTKPITMKVVFNGNATVDGYSLTFMWTGVSNYLNQQFSTPSCSFSYIAQE</sequence>
<organism>
    <name type="scientific">Human adenovirus A serotype 31</name>
    <name type="common">HAdV-31</name>
    <name type="synonym">Human adenovirus 31</name>
    <dbReference type="NCBI Taxonomy" id="10529"/>
    <lineage>
        <taxon>Viruses</taxon>
        <taxon>Varidnaviria</taxon>
        <taxon>Bamfordvirae</taxon>
        <taxon>Preplasmiviricota</taxon>
        <taxon>Tectiliviricetes</taxon>
        <taxon>Rowavirales</taxon>
        <taxon>Adenoviridae</taxon>
        <taxon>Mastadenovirus</taxon>
        <taxon>Human mastadenovirus A</taxon>
    </lineage>
</organism>
<evidence type="ECO:0000250" key="1"/>
<evidence type="ECO:0000256" key="2">
    <source>
        <dbReference type="SAM" id="MobiDB-lite"/>
    </source>
</evidence>
<evidence type="ECO:0000305" key="3"/>
<accession>P36848</accession>
<feature type="chain" id="PRO_0000221798" description="Fiber protein">
    <location>
        <begin position="1"/>
        <end position="556"/>
    </location>
</feature>
<feature type="region of interest" description="Disordered" evidence="2">
    <location>
        <begin position="1"/>
        <end position="22"/>
    </location>
</feature>
<protein>
    <recommendedName>
        <fullName>Fiber protein</fullName>
        <shortName>SPIKE</shortName>
    </recommendedName>
    <alternativeName>
        <fullName>Protein IV</fullName>
    </alternativeName>
</protein>
<reference key="1">
    <citation type="journal article" date="1995" name="Res. Virol.">
        <title>Sequence characterization of the adenovirus 31 fibre and comparison with serotypes of subgenera A to F.</title>
        <authorList>
            <person name="Pring-Akerblom P."/>
            <person name="Adrian T."/>
        </authorList>
    </citation>
    <scope>NUCLEOTIDE SEQUENCE [GENOMIC DNA]</scope>
    <source>
        <strain>VRL 15/62</strain>
    </source>
</reference>
<reference key="2">
    <citation type="journal article" date="2005" name="J. Virol.">
        <title>Adenovirus receptors.</title>
        <authorList>
            <person name="Zhang Y."/>
            <person name="Bergelson J.M."/>
        </authorList>
    </citation>
    <scope>REVIEW</scope>
</reference>
<gene>
    <name type="ORF">L5</name>
</gene>
<dbReference type="EMBL" id="X76548">
    <property type="protein sequence ID" value="CAA54050.1"/>
    <property type="molecule type" value="Genomic_DNA"/>
</dbReference>
<dbReference type="PIR" id="S39297">
    <property type="entry name" value="S39297"/>
</dbReference>
<dbReference type="SMR" id="P36848"/>
<dbReference type="GO" id="GO:0042025">
    <property type="term" value="C:host cell nucleus"/>
    <property type="evidence" value="ECO:0007669"/>
    <property type="project" value="UniProtKB-SubCell"/>
</dbReference>
<dbReference type="GO" id="GO:0019028">
    <property type="term" value="C:viral capsid"/>
    <property type="evidence" value="ECO:0007669"/>
    <property type="project" value="UniProtKB-KW"/>
</dbReference>
<dbReference type="GO" id="GO:0098671">
    <property type="term" value="P:adhesion receptor-mediated virion attachment to host cell"/>
    <property type="evidence" value="ECO:0007669"/>
    <property type="project" value="UniProtKB-KW"/>
</dbReference>
<dbReference type="GO" id="GO:0007155">
    <property type="term" value="P:cell adhesion"/>
    <property type="evidence" value="ECO:0007669"/>
    <property type="project" value="InterPro"/>
</dbReference>
<dbReference type="GO" id="GO:0046718">
    <property type="term" value="P:symbiont entry into host cell"/>
    <property type="evidence" value="ECO:0007669"/>
    <property type="project" value="UniProtKB-KW"/>
</dbReference>
<dbReference type="Gene3D" id="6.20.10.20">
    <property type="match status" value="1"/>
</dbReference>
<dbReference type="Gene3D" id="2.60.90.10">
    <property type="entry name" value="Adenovirus pIV-related, attachment domain"/>
    <property type="match status" value="1"/>
</dbReference>
<dbReference type="Gene3D" id="2.10.25.20">
    <property type="entry name" value="reovirus attachment protein sigma1, domain 1"/>
    <property type="match status" value="1"/>
</dbReference>
<dbReference type="InterPro" id="IPR000931">
    <property type="entry name" value="Adeno_fibre"/>
</dbReference>
<dbReference type="InterPro" id="IPR000978">
    <property type="entry name" value="Adeno_fibre_knob"/>
</dbReference>
<dbReference type="InterPro" id="IPR000939">
    <property type="entry name" value="Adenobir_fibre_prot_rpt/shaft"/>
</dbReference>
<dbReference type="InterPro" id="IPR008982">
    <property type="entry name" value="Adenovirus_pIV-like_att"/>
</dbReference>
<dbReference type="InterPro" id="IPR009013">
    <property type="entry name" value="Attachment_protein_shaft_sf"/>
</dbReference>
<dbReference type="Pfam" id="PF00541">
    <property type="entry name" value="Adeno_knob"/>
    <property type="match status" value="1"/>
</dbReference>
<dbReference type="Pfam" id="PF00608">
    <property type="entry name" value="Adeno_shaft"/>
    <property type="match status" value="5"/>
</dbReference>
<dbReference type="PRINTS" id="PR00307">
    <property type="entry name" value="ADENOVSFIBRE"/>
</dbReference>
<dbReference type="SUPFAM" id="SSF51225">
    <property type="entry name" value="Fibre shaft of virus attachment proteins"/>
    <property type="match status" value="3"/>
</dbReference>
<dbReference type="SUPFAM" id="SSF49835">
    <property type="entry name" value="Virus attachment protein globular domain"/>
    <property type="match status" value="1"/>
</dbReference>
<comment type="function">
    <text evidence="1">Forms spikes that protrude from each vertex of the icosahedral capsid. Interacts with host receptor CXCAR to provide virion initial attachment to target cell. Fiber proteins are shed during virus entry, when virus is still at the cell surface (By similarity).</text>
</comment>
<comment type="subunit">
    <text evidence="1">Homotrimer. Interacts with host receptor CXCAR. Interacts (via N-terminal tail region) with pentons (By similarity).</text>
</comment>
<comment type="subcellular location">
    <subcellularLocation>
        <location evidence="1">Virion</location>
    </subcellularLocation>
    <subcellularLocation>
        <location evidence="1">Host nucleus</location>
    </subcellularLocation>
    <text evidence="1">Anchored to the pentons, protrudes from the virion surface.</text>
</comment>
<comment type="induction">
    <text>Expressed in the late phase of the viral replicative cycle.</text>
</comment>
<comment type="domain">
    <text evidence="1">The tail region anchors the fiber to penton base capsomers, whereas the shaft, built from several repeated motifs, allows the knob to protrude from the virion.</text>
</comment>
<comment type="miscellaneous">
    <text evidence="1">All late proteins expressed from the major late promoter are produced by alternative splicing and alternative polyadenylation of the same gene giving rise to non-overlapping ORFs. A leader sequence is present in the N-terminus of all these mRNAs and is recognized by the viral shutoff protein to provide expression although conventional translation via ribosome scanning from the cap has been shut off in the host cell (By similarity).</text>
</comment>
<comment type="similarity">
    <text evidence="3">Belongs to the adenoviridae fiber family.</text>
</comment>
<organismHost>
    <name type="scientific">Homo sapiens</name>
    <name type="common">Human</name>
    <dbReference type="NCBI Taxonomy" id="9606"/>
</organismHost>